<proteinExistence type="inferred from homology"/>
<name>RPH_BACSU</name>
<evidence type="ECO:0000250" key="1">
    <source>
        <dbReference type="UniProtKB" id="A0A0X1KHF9"/>
    </source>
</evidence>
<evidence type="ECO:0000250" key="2">
    <source>
        <dbReference type="UniProtKB" id="Q81BR3"/>
    </source>
</evidence>
<evidence type="ECO:0000256" key="3">
    <source>
        <dbReference type="SAM" id="MobiDB-lite"/>
    </source>
</evidence>
<evidence type="ECO:0000305" key="4"/>
<evidence type="ECO:0000312" key="5">
    <source>
        <dbReference type="EMBL" id="AAB84457.1"/>
    </source>
</evidence>
<evidence type="ECO:0000312" key="6">
    <source>
        <dbReference type="EMBL" id="CAB13775.1"/>
    </source>
</evidence>
<feature type="chain" id="PRO_0000378089" description="Rifampicin phosphotransferase">
    <location>
        <begin position="1"/>
        <end position="866"/>
    </location>
</feature>
<feature type="region of interest" description="ATP-binding" evidence="1">
    <location>
        <begin position="1"/>
        <end position="313"/>
    </location>
</feature>
<feature type="region of interest" description="Rifampicin-binding" evidence="1">
    <location>
        <begin position="326"/>
        <end position="754"/>
    </location>
</feature>
<feature type="region of interest" description="Disordered" evidence="3">
    <location>
        <begin position="410"/>
        <end position="429"/>
    </location>
</feature>
<feature type="region of interest" description="Swivel phosphohistidine" evidence="1">
    <location>
        <begin position="767"/>
        <end position="865"/>
    </location>
</feature>
<feature type="active site" description="Tele-phosphohistidine intermediate" evidence="1">
    <location>
        <position position="825"/>
    </location>
</feature>
<feature type="binding site" evidence="1">
    <location>
        <position position="22"/>
    </location>
    <ligand>
        <name>ATP</name>
        <dbReference type="ChEBI" id="CHEBI:30616"/>
    </ligand>
</feature>
<feature type="binding site" evidence="1">
    <location>
        <position position="116"/>
    </location>
    <ligand>
        <name>ATP</name>
        <dbReference type="ChEBI" id="CHEBI:30616"/>
    </ligand>
</feature>
<feature type="binding site" evidence="1">
    <location>
        <position position="131"/>
    </location>
    <ligand>
        <name>ATP</name>
        <dbReference type="ChEBI" id="CHEBI:30616"/>
    </ligand>
</feature>
<feature type="binding site" evidence="1">
    <location>
        <position position="135"/>
    </location>
    <ligand>
        <name>ATP</name>
        <dbReference type="ChEBI" id="CHEBI:30616"/>
    </ligand>
</feature>
<feature type="binding site" evidence="1">
    <location>
        <position position="182"/>
    </location>
    <ligand>
        <name>ATP</name>
        <dbReference type="ChEBI" id="CHEBI:30616"/>
    </ligand>
</feature>
<feature type="binding site" evidence="1">
    <location>
        <position position="296"/>
    </location>
    <ligand>
        <name>ATP</name>
        <dbReference type="ChEBI" id="CHEBI:30616"/>
    </ligand>
</feature>
<feature type="binding site" evidence="1">
    <location>
        <position position="308"/>
    </location>
    <ligand>
        <name>ATP</name>
        <dbReference type="ChEBI" id="CHEBI:30616"/>
    </ligand>
</feature>
<feature type="binding site" evidence="1">
    <location>
        <position position="310"/>
    </location>
    <ligand>
        <name>ATP</name>
        <dbReference type="ChEBI" id="CHEBI:30616"/>
    </ligand>
</feature>
<feature type="sequence conflict" description="In Ref. 3; CAA84277." evidence="4" ref="3">
    <original>AQTLTD</original>
    <variation>GSNTELI</variation>
    <location>
        <begin position="267"/>
        <end position="272"/>
    </location>
</feature>
<feature type="sequence conflict" description="In Ref. 3; CAA84277." evidence="4" ref="3">
    <original>RQEALKKEQELLDRLKQLPDG</original>
    <variation>ATGSFEERTRVIRSIEAITGC</variation>
    <location>
        <begin position="625"/>
        <end position="645"/>
    </location>
</feature>
<feature type="sequence conflict" description="In Ref. 3; CAA84277." evidence="4" ref="3">
    <original>D</original>
    <variation>H</variation>
    <location>
        <position position="850"/>
    </location>
</feature>
<gene>
    <name evidence="2" type="primary">rph</name>
    <name evidence="5" type="synonym">pps</name>
    <name evidence="6" type="synonym">yppS</name>
    <name evidence="6" type="ordered locus">BSU18830</name>
</gene>
<accession>O34309</accession>
<accession>O69265</accession>
<accession>Q796E8</accession>
<sequence>MSSLVLGLHEIEKTQLSLVGGKGLHLGELSKIQGIQVPEGFCVTTVGYQKAIEQNETLQVLLDQLTMLKVEDRDQIGNISRKIRQIIMEVDIPSDVVKAVAQYLSQFGEEHAYAVRSSATAEDLPHASFAGQQDTYLNITGVDAILQHISKCWASLFTDRAVIYRMQNGFDHSQVYLSVIVQRMVFPQASGILFTADPITSNRKVLSIDAGFGLGEALVSGLVSADCFKVQDGQIIDKRIATKKMAIYGRKEGGTETQQIDSDQQKAQTLTDEQILQLARIGRQIEAHFGQPQDIEWCLARDTFYIVQSRPITTLFPIPEASDQENHVYISVGHQQMMTDPIKPLGLSFFLLTTVAPMRKAGGRLFVDVTHHLASPDSREVFLKGMGQHDQLLKDALMTIIKRRDFIKSIPNDKTAPNPSRGNADMPAQVENDPTIVSDLIESSQTSIEELKQNIQTKSGSDLFRFILEDIQELKKILFNPKSSVLIRTAMNASLWINEKMNEWLGEKNAADTLSQSVPHNITSEMGLALLDVADVIRPYPEVIDYLQHVKDDNFLDELAKFDGGSKTRDAIYDYLSKYGMRCTGEIDITRTRWSEKPTTLVPMILNNIKNFEPNVGHRKFEQGRQEALKKEQELLDRLKQLPDGEQKAKETKRAIDIIRNFSGFREYPKYGMVNRYFVYKQALLKEAEQLIEAGVIHEKEDIYYLTFEELHEVVRTHKLDYQIISTRKDEYTLYEKLSPPRVITSDGEIVTGEYKRENLPAGAIVGLPVSSGVIEGRARVILNMEDADLEDGDILVTSFTDPSWTPLFVSIKGLVTEVGGLMTHGAVIAREYGLPAVVGVENAAKLIKDGQRIRVHGTEGYIEIF</sequence>
<comment type="function">
    <text evidence="2">Catalyzes the phosphorylation of rifampicin, also known as rifampin (RIF), leading to its inactivation.</text>
</comment>
<comment type="catalytic activity">
    <reaction evidence="2">
        <text>rifampicin + ATP + H2O = 21-phosphorifampicin + AMP + phosphate + 2 H(+)</text>
        <dbReference type="Rhea" id="RHEA:56304"/>
        <dbReference type="ChEBI" id="CHEBI:15377"/>
        <dbReference type="ChEBI" id="CHEBI:15378"/>
        <dbReference type="ChEBI" id="CHEBI:30616"/>
        <dbReference type="ChEBI" id="CHEBI:43474"/>
        <dbReference type="ChEBI" id="CHEBI:71365"/>
        <dbReference type="ChEBI" id="CHEBI:140195"/>
        <dbReference type="ChEBI" id="CHEBI:456215"/>
        <dbReference type="EC" id="2.7.9.6"/>
    </reaction>
    <physiologicalReaction direction="left-to-right" evidence="2">
        <dbReference type="Rhea" id="RHEA:56305"/>
    </physiologicalReaction>
</comment>
<comment type="domain">
    <text evidence="1">Contains three domains: an N-terminal ATP-binding domain, a large central rifampicin (RIF)-binding domain and a small C-terminal swivel phosphohistidine domain that harbors the conserved histidine residue essential for phosphate transfer.</text>
</comment>
<comment type="similarity">
    <text evidence="4">Belongs to the rifampicin phosphotransferase family.</text>
</comment>
<keyword id="KW-0046">Antibiotic resistance</keyword>
<keyword id="KW-0067">ATP-binding</keyword>
<keyword id="KW-0418">Kinase</keyword>
<keyword id="KW-0547">Nucleotide-binding</keyword>
<keyword id="KW-1185">Reference proteome</keyword>
<keyword id="KW-0808">Transferase</keyword>
<organism>
    <name type="scientific">Bacillus subtilis (strain 168)</name>
    <dbReference type="NCBI Taxonomy" id="224308"/>
    <lineage>
        <taxon>Bacteria</taxon>
        <taxon>Bacillati</taxon>
        <taxon>Bacillota</taxon>
        <taxon>Bacilli</taxon>
        <taxon>Bacillales</taxon>
        <taxon>Bacillaceae</taxon>
        <taxon>Bacillus</taxon>
    </lineage>
</organism>
<dbReference type="EC" id="2.7.9.6" evidence="2"/>
<dbReference type="EMBL" id="AF027868">
    <property type="protein sequence ID" value="AAB84457.1"/>
    <property type="molecule type" value="Genomic_DNA"/>
</dbReference>
<dbReference type="EMBL" id="AL009126">
    <property type="protein sequence ID" value="CAB13775.1"/>
    <property type="molecule type" value="Genomic_DNA"/>
</dbReference>
<dbReference type="EMBL" id="Z34519">
    <property type="protein sequence ID" value="CAA84277.1"/>
    <property type="molecule type" value="Genomic_DNA"/>
</dbReference>
<dbReference type="PIR" id="F69681">
    <property type="entry name" value="F69681"/>
</dbReference>
<dbReference type="RefSeq" id="NP_389764.1">
    <property type="nucleotide sequence ID" value="NC_000964.3"/>
</dbReference>
<dbReference type="SMR" id="O34309"/>
<dbReference type="FunCoup" id="O34309">
    <property type="interactions" value="4"/>
</dbReference>
<dbReference type="STRING" id="224308.BSU18830"/>
<dbReference type="PaxDb" id="224308-BSU18830"/>
<dbReference type="EnsemblBacteria" id="CAB13775">
    <property type="protein sequence ID" value="CAB13775"/>
    <property type="gene ID" value="BSU_18830"/>
</dbReference>
<dbReference type="GeneID" id="939985"/>
<dbReference type="KEGG" id="bsu:BSU18830"/>
<dbReference type="PATRIC" id="fig|224308.179.peg.2053"/>
<dbReference type="eggNOG" id="COG0574">
    <property type="taxonomic scope" value="Bacteria"/>
</dbReference>
<dbReference type="eggNOG" id="COG3848">
    <property type="taxonomic scope" value="Bacteria"/>
</dbReference>
<dbReference type="InParanoid" id="O34309"/>
<dbReference type="OrthoDB" id="9765468at2"/>
<dbReference type="PhylomeDB" id="O34309"/>
<dbReference type="BioCyc" id="BSUB:BSU18830-MONOMER"/>
<dbReference type="Proteomes" id="UP000001570">
    <property type="component" value="Chromosome"/>
</dbReference>
<dbReference type="GO" id="GO:0005524">
    <property type="term" value="F:ATP binding"/>
    <property type="evidence" value="ECO:0007669"/>
    <property type="project" value="UniProtKB-KW"/>
</dbReference>
<dbReference type="GO" id="GO:0016301">
    <property type="term" value="F:kinase activity"/>
    <property type="evidence" value="ECO:0007669"/>
    <property type="project" value="UniProtKB-KW"/>
</dbReference>
<dbReference type="GO" id="GO:0046677">
    <property type="term" value="P:response to antibiotic"/>
    <property type="evidence" value="ECO:0007669"/>
    <property type="project" value="UniProtKB-KW"/>
</dbReference>
<dbReference type="FunFam" id="3.30.1490.20:FF:000010">
    <property type="entry name" value="Phosphoenolpyruvate synthase"/>
    <property type="match status" value="1"/>
</dbReference>
<dbReference type="FunFam" id="3.50.30.10:FF:000007">
    <property type="entry name" value="Phosphoenolpyruvate synthase"/>
    <property type="match status" value="1"/>
</dbReference>
<dbReference type="Gene3D" id="3.30.1490.20">
    <property type="entry name" value="ATP-grasp fold, A domain"/>
    <property type="match status" value="1"/>
</dbReference>
<dbReference type="Gene3D" id="3.30.470.20">
    <property type="entry name" value="ATP-grasp fold, B domain"/>
    <property type="match status" value="1"/>
</dbReference>
<dbReference type="Gene3D" id="3.50.30.10">
    <property type="entry name" value="Phosphohistidine domain"/>
    <property type="match status" value="1"/>
</dbReference>
<dbReference type="InterPro" id="IPR013815">
    <property type="entry name" value="ATP_grasp_subdomain_1"/>
</dbReference>
<dbReference type="InterPro" id="IPR008279">
    <property type="entry name" value="PEP-util_enz_mobile_dom"/>
</dbReference>
<dbReference type="InterPro" id="IPR051549">
    <property type="entry name" value="PEP_Utilizing_Enz"/>
</dbReference>
<dbReference type="InterPro" id="IPR036637">
    <property type="entry name" value="Phosphohistidine_dom_sf"/>
</dbReference>
<dbReference type="InterPro" id="IPR002192">
    <property type="entry name" value="PPDK_AMP/ATP-bd"/>
</dbReference>
<dbReference type="NCBIfam" id="NF004877">
    <property type="entry name" value="PRK06241.1-2"/>
    <property type="match status" value="1"/>
</dbReference>
<dbReference type="NCBIfam" id="NF004878">
    <property type="entry name" value="PRK06241.1-3"/>
    <property type="match status" value="1"/>
</dbReference>
<dbReference type="NCBIfam" id="NF004879">
    <property type="entry name" value="PRK06241.1-4"/>
    <property type="match status" value="1"/>
</dbReference>
<dbReference type="NCBIfam" id="NF041857">
    <property type="entry name" value="RIF_Ptrans_rph"/>
    <property type="match status" value="1"/>
</dbReference>
<dbReference type="PANTHER" id="PTHR43615">
    <property type="entry name" value="PHOSPHOENOLPYRUVATE SYNTHASE-RELATED"/>
    <property type="match status" value="1"/>
</dbReference>
<dbReference type="PANTHER" id="PTHR43615:SF1">
    <property type="entry name" value="PPDK_N DOMAIN-CONTAINING PROTEIN"/>
    <property type="match status" value="1"/>
</dbReference>
<dbReference type="Pfam" id="PF00391">
    <property type="entry name" value="PEP-utilizers"/>
    <property type="match status" value="1"/>
</dbReference>
<dbReference type="Pfam" id="PF01326">
    <property type="entry name" value="PPDK_N"/>
    <property type="match status" value="1"/>
</dbReference>
<dbReference type="SUPFAM" id="SSF56059">
    <property type="entry name" value="Glutathione synthetase ATP-binding domain-like"/>
    <property type="match status" value="1"/>
</dbReference>
<dbReference type="SUPFAM" id="SSF52009">
    <property type="entry name" value="Phosphohistidine domain"/>
    <property type="match status" value="1"/>
</dbReference>
<protein>
    <recommendedName>
        <fullName evidence="2">Rifampicin phosphotransferase</fullName>
        <ecNumber evidence="2">2.7.9.6</ecNumber>
    </recommendedName>
    <alternativeName>
        <fullName evidence="2">Rifampin phosphotransferase</fullName>
        <shortName evidence="2">RIF phosphotransferase</shortName>
    </alternativeName>
</protein>
<reference key="1">
    <citation type="submission" date="1997-10" db="EMBL/GenBank/DDBJ databases">
        <title>Sequence analysis of the Bacillus subtilis chromosome region between the terC and odhAB loci cloned in a yeast artificial chromosome.</title>
        <authorList>
            <person name="Lapidus A."/>
            <person name="Galleron N."/>
            <person name="Sorokin A."/>
            <person name="Ehrlich D."/>
        </authorList>
    </citation>
    <scope>NUCLEOTIDE SEQUENCE [GENOMIC DNA]</scope>
</reference>
<reference key="2">
    <citation type="journal article" date="1997" name="Nature">
        <title>The complete genome sequence of the Gram-positive bacterium Bacillus subtilis.</title>
        <authorList>
            <person name="Kunst F."/>
            <person name="Ogasawara N."/>
            <person name="Moszer I."/>
            <person name="Albertini A.M."/>
            <person name="Alloni G."/>
            <person name="Azevedo V."/>
            <person name="Bertero M.G."/>
            <person name="Bessieres P."/>
            <person name="Bolotin A."/>
            <person name="Borchert S."/>
            <person name="Borriss R."/>
            <person name="Boursier L."/>
            <person name="Brans A."/>
            <person name="Braun M."/>
            <person name="Brignell S.C."/>
            <person name="Bron S."/>
            <person name="Brouillet S."/>
            <person name="Bruschi C.V."/>
            <person name="Caldwell B."/>
            <person name="Capuano V."/>
            <person name="Carter N.M."/>
            <person name="Choi S.-K."/>
            <person name="Codani J.-J."/>
            <person name="Connerton I.F."/>
            <person name="Cummings N.J."/>
            <person name="Daniel R.A."/>
            <person name="Denizot F."/>
            <person name="Devine K.M."/>
            <person name="Duesterhoeft A."/>
            <person name="Ehrlich S.D."/>
            <person name="Emmerson P.T."/>
            <person name="Entian K.-D."/>
            <person name="Errington J."/>
            <person name="Fabret C."/>
            <person name="Ferrari E."/>
            <person name="Foulger D."/>
            <person name="Fritz C."/>
            <person name="Fujita M."/>
            <person name="Fujita Y."/>
            <person name="Fuma S."/>
            <person name="Galizzi A."/>
            <person name="Galleron N."/>
            <person name="Ghim S.-Y."/>
            <person name="Glaser P."/>
            <person name="Goffeau A."/>
            <person name="Golightly E.J."/>
            <person name="Grandi G."/>
            <person name="Guiseppi G."/>
            <person name="Guy B.J."/>
            <person name="Haga K."/>
            <person name="Haiech J."/>
            <person name="Harwood C.R."/>
            <person name="Henaut A."/>
            <person name="Hilbert H."/>
            <person name="Holsappel S."/>
            <person name="Hosono S."/>
            <person name="Hullo M.-F."/>
            <person name="Itaya M."/>
            <person name="Jones L.-M."/>
            <person name="Joris B."/>
            <person name="Karamata D."/>
            <person name="Kasahara Y."/>
            <person name="Klaerr-Blanchard M."/>
            <person name="Klein C."/>
            <person name="Kobayashi Y."/>
            <person name="Koetter P."/>
            <person name="Koningstein G."/>
            <person name="Krogh S."/>
            <person name="Kumano M."/>
            <person name="Kurita K."/>
            <person name="Lapidus A."/>
            <person name="Lardinois S."/>
            <person name="Lauber J."/>
            <person name="Lazarevic V."/>
            <person name="Lee S.-M."/>
            <person name="Levine A."/>
            <person name="Liu H."/>
            <person name="Masuda S."/>
            <person name="Mauel C."/>
            <person name="Medigue C."/>
            <person name="Medina N."/>
            <person name="Mellado R.P."/>
            <person name="Mizuno M."/>
            <person name="Moestl D."/>
            <person name="Nakai S."/>
            <person name="Noback M."/>
            <person name="Noone D."/>
            <person name="O'Reilly M."/>
            <person name="Ogawa K."/>
            <person name="Ogiwara A."/>
            <person name="Oudega B."/>
            <person name="Park S.-H."/>
            <person name="Parro V."/>
            <person name="Pohl T.M."/>
            <person name="Portetelle D."/>
            <person name="Porwollik S."/>
            <person name="Prescott A.M."/>
            <person name="Presecan E."/>
            <person name="Pujic P."/>
            <person name="Purnelle B."/>
            <person name="Rapoport G."/>
            <person name="Rey M."/>
            <person name="Reynolds S."/>
            <person name="Rieger M."/>
            <person name="Rivolta C."/>
            <person name="Rocha E."/>
            <person name="Roche B."/>
            <person name="Rose M."/>
            <person name="Sadaie Y."/>
            <person name="Sato T."/>
            <person name="Scanlan E."/>
            <person name="Schleich S."/>
            <person name="Schroeter R."/>
            <person name="Scoffone F."/>
            <person name="Sekiguchi J."/>
            <person name="Sekowska A."/>
            <person name="Seror S.J."/>
            <person name="Serror P."/>
            <person name="Shin B.-S."/>
            <person name="Soldo B."/>
            <person name="Sorokin A."/>
            <person name="Tacconi E."/>
            <person name="Takagi T."/>
            <person name="Takahashi H."/>
            <person name="Takemaru K."/>
            <person name="Takeuchi M."/>
            <person name="Tamakoshi A."/>
            <person name="Tanaka T."/>
            <person name="Terpstra P."/>
            <person name="Tognoni A."/>
            <person name="Tosato V."/>
            <person name="Uchiyama S."/>
            <person name="Vandenbol M."/>
            <person name="Vannier F."/>
            <person name="Vassarotti A."/>
            <person name="Viari A."/>
            <person name="Wambutt R."/>
            <person name="Wedler E."/>
            <person name="Wedler H."/>
            <person name="Weitzenegger T."/>
            <person name="Winters P."/>
            <person name="Wipat A."/>
            <person name="Yamamoto H."/>
            <person name="Yamane K."/>
            <person name="Yasumoto K."/>
            <person name="Yata K."/>
            <person name="Yoshida K."/>
            <person name="Yoshikawa H.-F."/>
            <person name="Zumstein E."/>
            <person name="Yoshikawa H."/>
            <person name="Danchin A."/>
        </authorList>
    </citation>
    <scope>NUCLEOTIDE SEQUENCE [LARGE SCALE GENOMIC DNA]</scope>
    <source>
        <strain>168</strain>
    </source>
</reference>
<reference key="3">
    <citation type="journal article" date="1995" name="Microbiology">
        <title>Genes encoding xylan and beta-glucan hydrolysing enzymes in Bacillus subtilis: characterization, mapping and construction of strains deficient in lichenase, cellulase and xylanase.</title>
        <authorList>
            <person name="Wolf M."/>
            <person name="Geczi A."/>
            <person name="Simon O."/>
            <person name="Borriss R."/>
        </authorList>
    </citation>
    <scope>NUCLEOTIDE SEQUENCE [GENOMIC DNA] OF 1-854</scope>
    <source>
        <strain>168</strain>
    </source>
</reference>